<proteinExistence type="inferred from homology"/>
<dbReference type="EC" id="6.1.1.10" evidence="1"/>
<dbReference type="EMBL" id="CP000569">
    <property type="protein sequence ID" value="ABN73456.1"/>
    <property type="status" value="ALT_INIT"/>
    <property type="molecule type" value="Genomic_DNA"/>
</dbReference>
<dbReference type="RefSeq" id="WP_042655082.1">
    <property type="nucleotide sequence ID" value="NC_009053.1"/>
</dbReference>
<dbReference type="SMR" id="A3MZ70"/>
<dbReference type="STRING" id="416269.APL_0352"/>
<dbReference type="EnsemblBacteria" id="ABN73456">
    <property type="protein sequence ID" value="ABN73456"/>
    <property type="gene ID" value="APL_0352"/>
</dbReference>
<dbReference type="KEGG" id="apl:APL_0352"/>
<dbReference type="PATRIC" id="fig|416269.6.peg.361"/>
<dbReference type="eggNOG" id="COG0073">
    <property type="taxonomic scope" value="Bacteria"/>
</dbReference>
<dbReference type="eggNOG" id="COG0143">
    <property type="taxonomic scope" value="Bacteria"/>
</dbReference>
<dbReference type="HOGENOM" id="CLU_009710_7_0_6"/>
<dbReference type="Proteomes" id="UP000001432">
    <property type="component" value="Chromosome"/>
</dbReference>
<dbReference type="GO" id="GO:0005829">
    <property type="term" value="C:cytosol"/>
    <property type="evidence" value="ECO:0007669"/>
    <property type="project" value="TreeGrafter"/>
</dbReference>
<dbReference type="GO" id="GO:0005524">
    <property type="term" value="F:ATP binding"/>
    <property type="evidence" value="ECO:0007669"/>
    <property type="project" value="UniProtKB-UniRule"/>
</dbReference>
<dbReference type="GO" id="GO:0046872">
    <property type="term" value="F:metal ion binding"/>
    <property type="evidence" value="ECO:0007669"/>
    <property type="project" value="UniProtKB-KW"/>
</dbReference>
<dbReference type="GO" id="GO:0004825">
    <property type="term" value="F:methionine-tRNA ligase activity"/>
    <property type="evidence" value="ECO:0007669"/>
    <property type="project" value="UniProtKB-UniRule"/>
</dbReference>
<dbReference type="GO" id="GO:0000049">
    <property type="term" value="F:tRNA binding"/>
    <property type="evidence" value="ECO:0007669"/>
    <property type="project" value="UniProtKB-KW"/>
</dbReference>
<dbReference type="GO" id="GO:0006431">
    <property type="term" value="P:methionyl-tRNA aminoacylation"/>
    <property type="evidence" value="ECO:0007669"/>
    <property type="project" value="UniProtKB-UniRule"/>
</dbReference>
<dbReference type="CDD" id="cd07957">
    <property type="entry name" value="Anticodon_Ia_Met"/>
    <property type="match status" value="1"/>
</dbReference>
<dbReference type="CDD" id="cd00814">
    <property type="entry name" value="MetRS_core"/>
    <property type="match status" value="1"/>
</dbReference>
<dbReference type="CDD" id="cd02800">
    <property type="entry name" value="tRNA_bind_EcMetRS_like"/>
    <property type="match status" value="1"/>
</dbReference>
<dbReference type="FunFam" id="1.10.730.10:FF:000005">
    <property type="entry name" value="Methionine--tRNA ligase"/>
    <property type="match status" value="1"/>
</dbReference>
<dbReference type="FunFam" id="2.20.28.20:FF:000001">
    <property type="entry name" value="Methionine--tRNA ligase"/>
    <property type="match status" value="1"/>
</dbReference>
<dbReference type="FunFam" id="2.40.50.140:FF:000042">
    <property type="entry name" value="Methionine--tRNA ligase"/>
    <property type="match status" value="1"/>
</dbReference>
<dbReference type="Gene3D" id="3.40.50.620">
    <property type="entry name" value="HUPs"/>
    <property type="match status" value="1"/>
</dbReference>
<dbReference type="Gene3D" id="1.10.730.10">
    <property type="entry name" value="Isoleucyl-tRNA Synthetase, Domain 1"/>
    <property type="match status" value="1"/>
</dbReference>
<dbReference type="Gene3D" id="2.20.28.20">
    <property type="entry name" value="Methionyl-tRNA synthetase, Zn-domain"/>
    <property type="match status" value="1"/>
</dbReference>
<dbReference type="Gene3D" id="2.40.50.140">
    <property type="entry name" value="Nucleic acid-binding proteins"/>
    <property type="match status" value="1"/>
</dbReference>
<dbReference type="HAMAP" id="MF_00098">
    <property type="entry name" value="Met_tRNA_synth_type1"/>
    <property type="match status" value="1"/>
</dbReference>
<dbReference type="InterPro" id="IPR001412">
    <property type="entry name" value="aa-tRNA-synth_I_CS"/>
</dbReference>
<dbReference type="InterPro" id="IPR041872">
    <property type="entry name" value="Anticodon_Met"/>
</dbReference>
<dbReference type="InterPro" id="IPR004495">
    <property type="entry name" value="Met-tRNA-synth_bsu_C"/>
</dbReference>
<dbReference type="InterPro" id="IPR023458">
    <property type="entry name" value="Met-tRNA_ligase_1"/>
</dbReference>
<dbReference type="InterPro" id="IPR014758">
    <property type="entry name" value="Met-tRNA_synth"/>
</dbReference>
<dbReference type="InterPro" id="IPR015413">
    <property type="entry name" value="Methionyl/Leucyl_tRNA_Synth"/>
</dbReference>
<dbReference type="InterPro" id="IPR033911">
    <property type="entry name" value="MetRS_core"/>
</dbReference>
<dbReference type="InterPro" id="IPR029038">
    <property type="entry name" value="MetRS_Zn"/>
</dbReference>
<dbReference type="InterPro" id="IPR012340">
    <property type="entry name" value="NA-bd_OB-fold"/>
</dbReference>
<dbReference type="InterPro" id="IPR014729">
    <property type="entry name" value="Rossmann-like_a/b/a_fold"/>
</dbReference>
<dbReference type="InterPro" id="IPR002547">
    <property type="entry name" value="tRNA-bd_dom"/>
</dbReference>
<dbReference type="InterPro" id="IPR009080">
    <property type="entry name" value="tRNAsynth_Ia_anticodon-bd"/>
</dbReference>
<dbReference type="NCBIfam" id="TIGR00398">
    <property type="entry name" value="metG"/>
    <property type="match status" value="1"/>
</dbReference>
<dbReference type="NCBIfam" id="TIGR00399">
    <property type="entry name" value="metG_C_term"/>
    <property type="match status" value="1"/>
</dbReference>
<dbReference type="NCBIfam" id="NF001100">
    <property type="entry name" value="PRK00133.1"/>
    <property type="match status" value="1"/>
</dbReference>
<dbReference type="PANTHER" id="PTHR45765">
    <property type="entry name" value="METHIONINE--TRNA LIGASE"/>
    <property type="match status" value="1"/>
</dbReference>
<dbReference type="PANTHER" id="PTHR45765:SF1">
    <property type="entry name" value="METHIONINE--TRNA LIGASE, CYTOPLASMIC"/>
    <property type="match status" value="1"/>
</dbReference>
<dbReference type="Pfam" id="PF19303">
    <property type="entry name" value="Anticodon_3"/>
    <property type="match status" value="1"/>
</dbReference>
<dbReference type="Pfam" id="PF09334">
    <property type="entry name" value="tRNA-synt_1g"/>
    <property type="match status" value="1"/>
</dbReference>
<dbReference type="Pfam" id="PF01588">
    <property type="entry name" value="tRNA_bind"/>
    <property type="match status" value="1"/>
</dbReference>
<dbReference type="PRINTS" id="PR01041">
    <property type="entry name" value="TRNASYNTHMET"/>
</dbReference>
<dbReference type="SUPFAM" id="SSF47323">
    <property type="entry name" value="Anticodon-binding domain of a subclass of class I aminoacyl-tRNA synthetases"/>
    <property type="match status" value="1"/>
</dbReference>
<dbReference type="SUPFAM" id="SSF57770">
    <property type="entry name" value="Methionyl-tRNA synthetase (MetRS), Zn-domain"/>
    <property type="match status" value="1"/>
</dbReference>
<dbReference type="SUPFAM" id="SSF50249">
    <property type="entry name" value="Nucleic acid-binding proteins"/>
    <property type="match status" value="1"/>
</dbReference>
<dbReference type="SUPFAM" id="SSF52374">
    <property type="entry name" value="Nucleotidylyl transferase"/>
    <property type="match status" value="1"/>
</dbReference>
<dbReference type="PROSITE" id="PS00178">
    <property type="entry name" value="AA_TRNA_LIGASE_I"/>
    <property type="match status" value="1"/>
</dbReference>
<dbReference type="PROSITE" id="PS50886">
    <property type="entry name" value="TRBD"/>
    <property type="match status" value="1"/>
</dbReference>
<sequence>MSRKMLVTCALPYANGAIHLGHMLEHIQADIWVRFQRMRGNEIYFVCADDAHGTPIMLNAAKQGITPEQLIEKAKADHVADFKGFNISFDNYHSTHSEENREITTEMYKKLRANGFIKSRVISQLFDPEKQMFLPDRFVKGTCPKCKAEDQYGDNCEVCASTYSPMDLINPRSAISGATPIVKESEHFFFDLPNFEGMLKEWTRSGSLQSEIANKMQEWFESGLQQWDISRDAPYFGFPIPDAENKFFYVWLDAPIGYMASFKNLCDRTGLNFDEFWKKDSETELYHFIGKDIVYFHSLFWPAMLDGCELRKPTNVFAHGYVTVDGVKMSKSRGTFIQASTYLKHIDPECLRYYYAAKLNERIEDLDLSLEDFVQRVNSDIVNKLVNLASRNASFIAKRFEGKLADKLEDEALFAEFIAQSEQIAAHYENREFNKAIRLIMDLCDKANKYVDDKAPWVIAKQEGCDAQLQAVCSMGIELFRVLMSYLKPVLPQLAERAEAFLQTELTWDNIQQPLLGQNVAPFKSLFSRLEKKQIDAVIEETKALFAAQNKEKGKQKVENTENTAVEPIAAEITIDDFAKLDLRVAKVISCEAVPESNKLLKFQLDLGDHQRQVLSGIKAAYNNPEELVGRFVIMVANLAPRKMKFGVSEGMILSAGTGGADLFLLSADEGIRPGMQVK</sequence>
<gene>
    <name evidence="1" type="primary">metG</name>
    <name type="ordered locus">APL_0352</name>
</gene>
<organism>
    <name type="scientific">Actinobacillus pleuropneumoniae serotype 5b (strain L20)</name>
    <dbReference type="NCBI Taxonomy" id="416269"/>
    <lineage>
        <taxon>Bacteria</taxon>
        <taxon>Pseudomonadati</taxon>
        <taxon>Pseudomonadota</taxon>
        <taxon>Gammaproteobacteria</taxon>
        <taxon>Pasteurellales</taxon>
        <taxon>Pasteurellaceae</taxon>
        <taxon>Actinobacillus</taxon>
    </lineage>
</organism>
<comment type="function">
    <text evidence="1">Is required not only for elongation of protein synthesis but also for the initiation of all mRNA translation through initiator tRNA(fMet) aminoacylation.</text>
</comment>
<comment type="catalytic activity">
    <reaction evidence="1">
        <text>tRNA(Met) + L-methionine + ATP = L-methionyl-tRNA(Met) + AMP + diphosphate</text>
        <dbReference type="Rhea" id="RHEA:13481"/>
        <dbReference type="Rhea" id="RHEA-COMP:9667"/>
        <dbReference type="Rhea" id="RHEA-COMP:9698"/>
        <dbReference type="ChEBI" id="CHEBI:30616"/>
        <dbReference type="ChEBI" id="CHEBI:33019"/>
        <dbReference type="ChEBI" id="CHEBI:57844"/>
        <dbReference type="ChEBI" id="CHEBI:78442"/>
        <dbReference type="ChEBI" id="CHEBI:78530"/>
        <dbReference type="ChEBI" id="CHEBI:456215"/>
        <dbReference type="EC" id="6.1.1.10"/>
    </reaction>
</comment>
<comment type="cofactor">
    <cofactor evidence="1">
        <name>Zn(2+)</name>
        <dbReference type="ChEBI" id="CHEBI:29105"/>
    </cofactor>
    <text evidence="1">Binds 1 zinc ion per subunit.</text>
</comment>
<comment type="subunit">
    <text evidence="1">Homodimer.</text>
</comment>
<comment type="subcellular location">
    <subcellularLocation>
        <location evidence="1">Cytoplasm</location>
    </subcellularLocation>
</comment>
<comment type="similarity">
    <text evidence="1">Belongs to the class-I aminoacyl-tRNA synthetase family. MetG type 1 subfamily.</text>
</comment>
<comment type="sequence caution" evidence="2">
    <conflict type="erroneous initiation">
        <sequence resource="EMBL-CDS" id="ABN73456"/>
    </conflict>
</comment>
<evidence type="ECO:0000255" key="1">
    <source>
        <dbReference type="HAMAP-Rule" id="MF_00098"/>
    </source>
</evidence>
<evidence type="ECO:0000305" key="2"/>
<protein>
    <recommendedName>
        <fullName evidence="1">Methionine--tRNA ligase</fullName>
        <ecNumber evidence="1">6.1.1.10</ecNumber>
    </recommendedName>
    <alternativeName>
        <fullName evidence="1">Methionyl-tRNA synthetase</fullName>
        <shortName evidence="1">MetRS</shortName>
    </alternativeName>
</protein>
<accession>A3MZ70</accession>
<feature type="chain" id="PRO_0000331773" description="Methionine--tRNA ligase">
    <location>
        <begin position="1"/>
        <end position="679"/>
    </location>
</feature>
<feature type="domain" description="tRNA-binding" evidence="1">
    <location>
        <begin position="577"/>
        <end position="679"/>
    </location>
</feature>
<feature type="short sequence motif" description="'HIGH' region">
    <location>
        <begin position="12"/>
        <end position="22"/>
    </location>
</feature>
<feature type="short sequence motif" description="'KMSKS' region">
    <location>
        <begin position="328"/>
        <end position="332"/>
    </location>
</feature>
<feature type="binding site" evidence="1">
    <location>
        <position position="143"/>
    </location>
    <ligand>
        <name>Zn(2+)</name>
        <dbReference type="ChEBI" id="CHEBI:29105"/>
    </ligand>
</feature>
<feature type="binding site" evidence="1">
    <location>
        <position position="146"/>
    </location>
    <ligand>
        <name>Zn(2+)</name>
        <dbReference type="ChEBI" id="CHEBI:29105"/>
    </ligand>
</feature>
<feature type="binding site" evidence="1">
    <location>
        <position position="156"/>
    </location>
    <ligand>
        <name>Zn(2+)</name>
        <dbReference type="ChEBI" id="CHEBI:29105"/>
    </ligand>
</feature>
<feature type="binding site" evidence="1">
    <location>
        <position position="159"/>
    </location>
    <ligand>
        <name>Zn(2+)</name>
        <dbReference type="ChEBI" id="CHEBI:29105"/>
    </ligand>
</feature>
<feature type="binding site" evidence="1">
    <location>
        <position position="331"/>
    </location>
    <ligand>
        <name>ATP</name>
        <dbReference type="ChEBI" id="CHEBI:30616"/>
    </ligand>
</feature>
<keyword id="KW-0030">Aminoacyl-tRNA synthetase</keyword>
<keyword id="KW-0067">ATP-binding</keyword>
<keyword id="KW-0963">Cytoplasm</keyword>
<keyword id="KW-0436">Ligase</keyword>
<keyword id="KW-0479">Metal-binding</keyword>
<keyword id="KW-0547">Nucleotide-binding</keyword>
<keyword id="KW-0648">Protein biosynthesis</keyword>
<keyword id="KW-1185">Reference proteome</keyword>
<keyword id="KW-0694">RNA-binding</keyword>
<keyword id="KW-0820">tRNA-binding</keyword>
<keyword id="KW-0862">Zinc</keyword>
<reference key="1">
    <citation type="journal article" date="2008" name="J. Bacteriol.">
        <title>The complete genome sequence of Actinobacillus pleuropneumoniae L20 (serotype 5b).</title>
        <authorList>
            <person name="Foote S.J."/>
            <person name="Bosse J.T."/>
            <person name="Bouevitch A.B."/>
            <person name="Langford P.R."/>
            <person name="Young N.M."/>
            <person name="Nash J.H.E."/>
        </authorList>
    </citation>
    <scope>NUCLEOTIDE SEQUENCE [LARGE SCALE GENOMIC DNA]</scope>
    <source>
        <strain>L20</strain>
    </source>
</reference>
<name>SYM_ACTP2</name>